<proteinExistence type="evidence at transcript level"/>
<feature type="chain" id="PRO_0000154821" description="Integral membrane protein 2B">
    <location>
        <begin position="1"/>
        <end position="266"/>
    </location>
</feature>
<feature type="chain" id="PRO_0000417467" description="BRI2, membrane form" evidence="1">
    <location>
        <begin position="1"/>
        <end position="243"/>
    </location>
</feature>
<feature type="chain" id="PRO_0000417468" description="BRI2 intracellular domain" evidence="1">
    <location>
        <begin position="1"/>
        <end status="unknown"/>
    </location>
</feature>
<feature type="chain" id="PRO_0000417469" description="BRI2C, soluble form" evidence="1">
    <location>
        <begin status="unknown"/>
        <end position="243"/>
    </location>
</feature>
<feature type="peptide" id="PRO_0000417470" description="Bri23 peptide" evidence="1">
    <location>
        <begin position="244"/>
        <end position="266"/>
    </location>
</feature>
<feature type="topological domain" description="Cytoplasmic" evidence="4">
    <location>
        <begin position="1"/>
        <end position="54"/>
    </location>
</feature>
<feature type="transmembrane region" description="Helical; Signal-anchor for type II membrane protein" evidence="4">
    <location>
        <begin position="55"/>
        <end position="75"/>
    </location>
</feature>
<feature type="topological domain" description="Lumenal" evidence="4">
    <location>
        <begin position="76"/>
        <end position="266"/>
    </location>
</feature>
<feature type="domain" description="BRICHOS" evidence="5">
    <location>
        <begin position="137"/>
        <end position="231"/>
    </location>
</feature>
<feature type="region of interest" description="Necessary for interaction with APP and inhibitor effects on APP processing" evidence="1">
    <location>
        <begin position="102"/>
        <end position="134"/>
    </location>
</feature>
<feature type="site" description="Cleavage; by furin" evidence="1">
    <location>
        <begin position="243"/>
        <end position="244"/>
    </location>
</feature>
<feature type="glycosylation site" description="N-linked (GlcNAc...) asparagine" evidence="4">
    <location>
        <position position="170"/>
    </location>
</feature>
<feature type="disulfide bond" description="Interchain" evidence="1">
    <location>
        <position position="89"/>
    </location>
</feature>
<feature type="disulfide bond" evidence="1">
    <location>
        <begin position="164"/>
        <end position="223"/>
    </location>
</feature>
<feature type="disulfide bond" evidence="1">
    <location>
        <begin position="248"/>
        <end position="265"/>
    </location>
</feature>
<feature type="sequence conflict" description="In Ref. 1; BAC20585." evidence="6" ref="1">
    <original>K</original>
    <variation>I</variation>
    <location>
        <position position="230"/>
    </location>
</feature>
<reference key="1">
    <citation type="submission" date="2003-10" db="EMBL/GenBank/DDBJ databases">
        <title>Isolation and characterization of cDNA for macaque neurological disease genes.</title>
        <authorList>
            <person name="Kusuda J."/>
            <person name="Osada N."/>
            <person name="Tanuma R."/>
            <person name="Hirata M."/>
            <person name="Sugano S."/>
            <person name="Hashimoto K."/>
        </authorList>
    </citation>
    <scope>NUCLEOTIDE SEQUENCE [LARGE SCALE MRNA]</scope>
    <source>
        <tissue>Frontal cortex</tissue>
    </source>
</reference>
<reference key="2">
    <citation type="submission" date="2005-06" db="EMBL/GenBank/DDBJ databases">
        <title>DNA sequences of macaque genes expressed in brain or testis and its evolutionary implications.</title>
        <authorList>
            <consortium name="International consortium for macaque cDNA sequencing and analysis"/>
        </authorList>
    </citation>
    <scope>NUCLEOTIDE SEQUENCE [LARGE SCALE MRNA]</scope>
    <source>
        <tissue>Testis</tissue>
    </source>
</reference>
<organism>
    <name type="scientific">Macaca fascicularis</name>
    <name type="common">Crab-eating macaque</name>
    <name type="synonym">Cynomolgus monkey</name>
    <dbReference type="NCBI Taxonomy" id="9541"/>
    <lineage>
        <taxon>Eukaryota</taxon>
        <taxon>Metazoa</taxon>
        <taxon>Chordata</taxon>
        <taxon>Craniata</taxon>
        <taxon>Vertebrata</taxon>
        <taxon>Euteleostomi</taxon>
        <taxon>Mammalia</taxon>
        <taxon>Eutheria</taxon>
        <taxon>Euarchontoglires</taxon>
        <taxon>Primates</taxon>
        <taxon>Haplorrhini</taxon>
        <taxon>Catarrhini</taxon>
        <taxon>Cercopithecidae</taxon>
        <taxon>Cercopithecinae</taxon>
        <taxon>Macaca</taxon>
    </lineage>
</organism>
<evidence type="ECO:0000250" key="1"/>
<evidence type="ECO:0000250" key="2">
    <source>
        <dbReference type="UniProtKB" id="O89051"/>
    </source>
</evidence>
<evidence type="ECO:0000250" key="3">
    <source>
        <dbReference type="UniProtKB" id="Q9Y287"/>
    </source>
</evidence>
<evidence type="ECO:0000255" key="4"/>
<evidence type="ECO:0000255" key="5">
    <source>
        <dbReference type="PROSITE-ProRule" id="PRU00255"/>
    </source>
</evidence>
<evidence type="ECO:0000305" key="6"/>
<sequence length="266" mass="30338">MVKVTFNSALAQKEAKKDEPKSGEEALIIPPDAVAVDCKDPDDVVPVGQRRAWCWCMCFGLAFMLAGVILGGAYLYKYFALQPDDVYYCGIKYIKDDVILNEPSADAPAALYQTIEENIKIFEEEEVEFISVPVPEFADSDPANIVHDFNKKLTAYLDLNLDKCYVIPLNTSIVMPPRNLLELLINIKAGTYLPQSYLIHEHMVITDRIENIDHLGFFIYRLCHDKETYKLQRRETIKGIQKREASNCFAIRHFENKFAVETLICS</sequence>
<accession>Q60HC1</accession>
<accession>Q4R8U8</accession>
<accession>Q8HXY3</accession>
<keyword id="KW-1003">Cell membrane</keyword>
<keyword id="KW-1015">Disulfide bond</keyword>
<keyword id="KW-0967">Endosome</keyword>
<keyword id="KW-0325">Glycoprotein</keyword>
<keyword id="KW-0333">Golgi apparatus</keyword>
<keyword id="KW-0472">Membrane</keyword>
<keyword id="KW-1185">Reference proteome</keyword>
<keyword id="KW-0964">Secreted</keyword>
<keyword id="KW-0735">Signal-anchor</keyword>
<keyword id="KW-0812">Transmembrane</keyword>
<keyword id="KW-1133">Transmembrane helix</keyword>
<gene>
    <name type="primary">ITM2B</name>
    <name type="synonym">BRI</name>
    <name type="ORF">QflA-11829</name>
    <name type="ORF">QflA-12336</name>
    <name type="ORF">QtsA-11432</name>
</gene>
<name>ITM2B_MACFA</name>
<dbReference type="EMBL" id="AB083306">
    <property type="protein sequence ID" value="BAC20585.1"/>
    <property type="molecule type" value="mRNA"/>
</dbReference>
<dbReference type="EMBL" id="AB125206">
    <property type="protein sequence ID" value="BAD51994.1"/>
    <property type="molecule type" value="mRNA"/>
</dbReference>
<dbReference type="EMBL" id="AB168350">
    <property type="protein sequence ID" value="BAE00473.1"/>
    <property type="molecule type" value="mRNA"/>
</dbReference>
<dbReference type="RefSeq" id="NP_001270631.1">
    <property type="nucleotide sequence ID" value="NM_001283702.1"/>
</dbReference>
<dbReference type="RefSeq" id="XP_015294458.1">
    <property type="nucleotide sequence ID" value="XM_015438972.3"/>
</dbReference>
<dbReference type="SMR" id="Q60HC1"/>
<dbReference type="STRING" id="9541.ENSMFAP00000031508"/>
<dbReference type="GlyCosmos" id="Q60HC1">
    <property type="glycosylation" value="1 site, No reported glycans"/>
</dbReference>
<dbReference type="GeneID" id="101926229"/>
<dbReference type="KEGG" id="mcf:101926229"/>
<dbReference type="CTD" id="9445"/>
<dbReference type="VEuPathDB" id="HostDB:ENSMFAG00000036817"/>
<dbReference type="eggNOG" id="KOG4681">
    <property type="taxonomic scope" value="Eukaryota"/>
</dbReference>
<dbReference type="OMA" id="YFAFQQD"/>
<dbReference type="OrthoDB" id="11549at314294"/>
<dbReference type="Proteomes" id="UP000233100">
    <property type="component" value="Chromosome 17"/>
</dbReference>
<dbReference type="GO" id="GO:0010008">
    <property type="term" value="C:endosome membrane"/>
    <property type="evidence" value="ECO:0007669"/>
    <property type="project" value="UniProtKB-SubCell"/>
</dbReference>
<dbReference type="GO" id="GO:0070062">
    <property type="term" value="C:extracellular exosome"/>
    <property type="evidence" value="ECO:0007669"/>
    <property type="project" value="TreeGrafter"/>
</dbReference>
<dbReference type="GO" id="GO:0005615">
    <property type="term" value="C:extracellular space"/>
    <property type="evidence" value="ECO:0000250"/>
    <property type="project" value="UniProtKB"/>
</dbReference>
<dbReference type="GO" id="GO:0000139">
    <property type="term" value="C:Golgi membrane"/>
    <property type="evidence" value="ECO:0007669"/>
    <property type="project" value="UniProtKB-SubCell"/>
</dbReference>
<dbReference type="GO" id="GO:0030660">
    <property type="term" value="C:Golgi-associated vesicle membrane"/>
    <property type="evidence" value="ECO:0000250"/>
    <property type="project" value="UniProtKB"/>
</dbReference>
<dbReference type="GO" id="GO:0031090">
    <property type="term" value="C:organelle membrane"/>
    <property type="evidence" value="ECO:0000250"/>
    <property type="project" value="UniProtKB"/>
</dbReference>
<dbReference type="GO" id="GO:0005886">
    <property type="term" value="C:plasma membrane"/>
    <property type="evidence" value="ECO:0000250"/>
    <property type="project" value="UniProtKB"/>
</dbReference>
<dbReference type="GO" id="GO:0001540">
    <property type="term" value="F:amyloid-beta binding"/>
    <property type="evidence" value="ECO:0007669"/>
    <property type="project" value="TreeGrafter"/>
</dbReference>
<dbReference type="GO" id="GO:0042985">
    <property type="term" value="P:negative regulation of amyloid precursor protein biosynthetic process"/>
    <property type="evidence" value="ECO:0000250"/>
    <property type="project" value="UniProtKB"/>
</dbReference>
<dbReference type="InterPro" id="IPR007084">
    <property type="entry name" value="BRICHOS_dom"/>
</dbReference>
<dbReference type="InterPro" id="IPR040145">
    <property type="entry name" value="ITM2"/>
</dbReference>
<dbReference type="PANTHER" id="PTHR10962:SF4">
    <property type="entry name" value="INTEGRAL MEMBRANE PROTEIN 2B"/>
    <property type="match status" value="1"/>
</dbReference>
<dbReference type="PANTHER" id="PTHR10962">
    <property type="entry name" value="INTEGRAL TRANSMEMBRANE PROTEIN 2"/>
    <property type="match status" value="1"/>
</dbReference>
<dbReference type="Pfam" id="PF04089">
    <property type="entry name" value="BRICHOS"/>
    <property type="match status" value="1"/>
</dbReference>
<dbReference type="SMART" id="SM01039">
    <property type="entry name" value="BRICHOS"/>
    <property type="match status" value="1"/>
</dbReference>
<dbReference type="PROSITE" id="PS50869">
    <property type="entry name" value="BRICHOS"/>
    <property type="match status" value="1"/>
</dbReference>
<protein>
    <recommendedName>
        <fullName>Integral membrane protein 2B</fullName>
    </recommendedName>
    <alternativeName>
        <fullName>Immature BRI2</fullName>
        <shortName>imBRI2</shortName>
    </alternativeName>
    <alternativeName>
        <fullName>Transmembrane protein BRI</fullName>
        <shortName>Bri</shortName>
    </alternativeName>
    <component>
        <recommendedName>
            <fullName>BRI2, membrane form</fullName>
        </recommendedName>
        <alternativeName>
            <fullName>Mature BRI2</fullName>
            <shortName>mBRI2</shortName>
        </alternativeName>
    </component>
    <component>
        <recommendedName>
            <fullName>BRI2 intracellular domain</fullName>
            <shortName>BRI2 ICD</shortName>
        </recommendedName>
    </component>
    <component>
        <recommendedName>
            <fullName>BRI2C, soluble form</fullName>
        </recommendedName>
    </component>
    <component>
        <recommendedName>
            <fullName>Bri23 peptide</fullName>
            <shortName>Bri2-23</shortName>
        </recommendedName>
        <alternativeName>
            <fullName>ABri23</fullName>
        </alternativeName>
        <alternativeName>
            <fullName>C-terminal peptide</fullName>
        </alternativeName>
        <alternativeName>
            <fullName>P23 peptide</fullName>
        </alternativeName>
    </component>
</protein>
<comment type="function">
    <text evidence="1">Plays a regulatory role in the processing of the amyloid-beta A4 precursor protein (APP) and acts as an inhibitor of the amyloid-beta peptide aggregation and fibrils deposition. Plays a role in the induction of neurite outgrowth. Functions as a protease inhibitor by blocking access of secretases to APP cleavage sites (By similarity).</text>
</comment>
<comment type="function">
    <text evidence="1">Mature BRI2 (mBRI2) functions as a modulator of the amyloid-beta A4 precursor protein (APP) processing leading to a strong reduction in the secretion of secretase-processed amyloid-beta protein 40 and amyloid-beta protein 42.</text>
</comment>
<comment type="function">
    <text evidence="1">Bri23 peptide prevents aggregation of APP amyloid-beta protein 42 into toxic oligomers.</text>
</comment>
<comment type="subunit">
    <text evidence="1 2">Homodimer; disulfide-linked. Interacts with SPPL2A and SPPL2B. Interacts with APP. Mature BRI2 (mBRI2) interacts with the APP amyloid-beta A4 protein; the interaction occurs at the cell surface and in the endocytic compartments and enable alpha- and beta-secretase-induced APP cleavage inhibition. Mature BRI2 (mBRI2) interacts with the APP C99; the interaction occurs in the endocytic compartments and enable gamma-secretase-induced C99 cleavage inhibition. May form heterodimers with Bri23 peptide and APP amyloid-beta protein 40 (By similarity). Interacts with ADAM7 in sperm; the interaction increases following capacitation (By similarity).</text>
</comment>
<comment type="subcellular location">
    <molecule>Integral membrane protein 2B</molecule>
    <subcellularLocation>
        <location evidence="3">Golgi apparatus membrane</location>
        <topology evidence="3">Single-pass type II membrane protein</topology>
    </subcellularLocation>
    <text evidence="3">Immature BRI2 (imBRI2) is cleaved by furin in the Golgi into mBRI2 and a Bri23 peptide. mBRI2 is transported to the plasma membrane and Bri23 peptide is secreted.</text>
</comment>
<comment type="subcellular location">
    <molecule>BRI2, membrane form</molecule>
    <subcellularLocation>
        <location evidence="3">Cell membrane</location>
        <topology evidence="3">Single-pass type II membrane protein</topology>
    </subcellularLocation>
    <subcellularLocation>
        <location evidence="3">Endosome membrane</location>
        <topology evidence="3">Single-pass type II membrane protein</topology>
    </subcellularLocation>
    <text evidence="3">Mature BRI2 (mBRI2) needs to be transported from the endoplasmic reticulum compartment to the cell membrane in order to be able to inhibit APP processing.</text>
</comment>
<comment type="subcellular location">
    <molecule>Bri23 peptide</molecule>
    <subcellularLocation>
        <location evidence="3">Secreted</location>
    </subcellularLocation>
    <text evidence="3">Detected in the cerebral spinal fluid (CSF).</text>
</comment>
<comment type="subcellular location">
    <molecule>BRI2C, soluble form</molecule>
    <subcellularLocation>
        <location evidence="3">Secreted</location>
    </subcellularLocation>
</comment>
<comment type="PTM">
    <text evidence="1">The ectodomain C-terminal part of the imBRI2 is processed by furin producing a secreted Bri23 peptide and a mature BRI2, membrane form (mBRI2). The remaining part of the ectodomain of mBRI2 containing the BRICHOS domain is cleaved by ADAM10 and is secreted (BRI2C, soluble form). The membrane-bound N-terminal fragment (BRI2C, membrane form) is further proteolytically processed by SPPL2A and SPPL2B through regulated intramembrane proteolysis producing a secreted C-peptide and a BRI2 intracellular domain (BRI2 ICD) released in the cytosol. Shedding by ADAM10 facilitates intramembrane cleavage but is not absolutely required for BRI2 ICD generation (By similarity).</text>
</comment>
<comment type="PTM">
    <text evidence="1">Glycosylation at Asn-170 is important for cell surface localization, but doesn't affect furin- and ADAM10-induced proteolytic processing.</text>
</comment>
<comment type="similarity">
    <text evidence="6">Belongs to the ITM2 family.</text>
</comment>